<reference key="1">
    <citation type="journal article" date="2004" name="DNA Seq.">
        <title>Cloning and characterization of a novel human RNA binding protein gene PNO1.</title>
        <authorList>
            <person name="Zhou G.-J."/>
            <person name="Zhang Y."/>
            <person name="Wang J."/>
            <person name="Guo J.H."/>
            <person name="Ni J."/>
            <person name="Zhong Z.-M."/>
            <person name="Wang L.-Q."/>
            <person name="Dang Y.-J."/>
            <person name="Dai J.F."/>
            <person name="Yu L."/>
        </authorList>
    </citation>
    <scope>NUCLEOTIDE SEQUENCE [MRNA]</scope>
</reference>
<reference key="2">
    <citation type="submission" date="2007-06" db="EMBL/GenBank/DDBJ databases">
        <authorList>
            <consortium name="NIH - Mammalian Gene Collection (MGC) project"/>
        </authorList>
    </citation>
    <scope>NUCLEOTIDE SEQUENCE [LARGE SCALE MRNA]</scope>
    <source>
        <strain>Hereford</strain>
        <tissue>Uterus</tissue>
    </source>
</reference>
<dbReference type="EMBL" id="AY336967">
    <property type="protein sequence ID" value="AAQ16143.1"/>
    <property type="molecule type" value="mRNA"/>
</dbReference>
<dbReference type="EMBL" id="BC147981">
    <property type="protein sequence ID" value="AAI47982.1"/>
    <property type="molecule type" value="mRNA"/>
</dbReference>
<dbReference type="RefSeq" id="NP_898908.1">
    <property type="nucleotide sequence ID" value="NM_183085.1"/>
</dbReference>
<dbReference type="SMR" id="Q7YRD0"/>
<dbReference type="FunCoup" id="Q7YRD0">
    <property type="interactions" value="2042"/>
</dbReference>
<dbReference type="STRING" id="9913.ENSBTAP00000014019"/>
<dbReference type="PaxDb" id="9913-ENSBTAP00000014019"/>
<dbReference type="Ensembl" id="ENSBTAT00000014019.4">
    <property type="protein sequence ID" value="ENSBTAP00000014019.3"/>
    <property type="gene ID" value="ENSBTAG00000010604.4"/>
</dbReference>
<dbReference type="GeneID" id="360193"/>
<dbReference type="KEGG" id="bta:360193"/>
<dbReference type="CTD" id="56902"/>
<dbReference type="VEuPathDB" id="HostDB:ENSBTAG00000010604"/>
<dbReference type="VGNC" id="VGNC:33088">
    <property type="gene designation" value="PNO1"/>
</dbReference>
<dbReference type="eggNOG" id="KOG3273">
    <property type="taxonomic scope" value="Eukaryota"/>
</dbReference>
<dbReference type="GeneTree" id="ENSGT00390000018052"/>
<dbReference type="HOGENOM" id="CLU_064992_2_0_1"/>
<dbReference type="InParanoid" id="Q7YRD0"/>
<dbReference type="OMA" id="TPLRNNW"/>
<dbReference type="OrthoDB" id="1932641at2759"/>
<dbReference type="TreeFam" id="TF300114"/>
<dbReference type="Reactome" id="R-BTA-6791226">
    <property type="pathway name" value="Major pathway of rRNA processing in the nucleolus and cytosol"/>
</dbReference>
<dbReference type="Proteomes" id="UP000009136">
    <property type="component" value="Chromosome 11"/>
</dbReference>
<dbReference type="Bgee" id="ENSBTAG00000010604">
    <property type="expression patterns" value="Expressed in oocyte and 108 other cell types or tissues"/>
</dbReference>
<dbReference type="GO" id="GO:0005730">
    <property type="term" value="C:nucleolus"/>
    <property type="evidence" value="ECO:0007669"/>
    <property type="project" value="UniProtKB-SubCell"/>
</dbReference>
<dbReference type="GO" id="GO:0005654">
    <property type="term" value="C:nucleoplasm"/>
    <property type="evidence" value="ECO:0007669"/>
    <property type="project" value="Ensembl"/>
</dbReference>
<dbReference type="GO" id="GO:0005634">
    <property type="term" value="C:nucleus"/>
    <property type="evidence" value="ECO:0000318"/>
    <property type="project" value="GO_Central"/>
</dbReference>
<dbReference type="GO" id="GO:0032040">
    <property type="term" value="C:small-subunit processome"/>
    <property type="evidence" value="ECO:0000250"/>
    <property type="project" value="UniProtKB"/>
</dbReference>
<dbReference type="GO" id="GO:0003723">
    <property type="term" value="F:RNA binding"/>
    <property type="evidence" value="ECO:0007669"/>
    <property type="project" value="UniProtKB-KW"/>
</dbReference>
<dbReference type="GO" id="GO:0042274">
    <property type="term" value="P:ribosomal small subunit biogenesis"/>
    <property type="evidence" value="ECO:0000250"/>
    <property type="project" value="UniProtKB"/>
</dbReference>
<dbReference type="CDD" id="cd22391">
    <property type="entry name" value="KH-I_PNO1_rpt1"/>
    <property type="match status" value="1"/>
</dbReference>
<dbReference type="CDD" id="cd22392">
    <property type="entry name" value="KH-I_PNO1_rpt2"/>
    <property type="match status" value="1"/>
</dbReference>
<dbReference type="FunFam" id="3.30.1370.10:FF:000009">
    <property type="entry name" value="RNA-binding protein PNO1"/>
    <property type="match status" value="1"/>
</dbReference>
<dbReference type="FunFam" id="3.30.1370.10:FF:000048">
    <property type="entry name" value="RNA-binding protein PNO1 isoform X2"/>
    <property type="match status" value="1"/>
</dbReference>
<dbReference type="Gene3D" id="3.30.1370.10">
    <property type="entry name" value="K Homology domain, type 1"/>
    <property type="match status" value="2"/>
</dbReference>
<dbReference type="InterPro" id="IPR055212">
    <property type="entry name" value="KH-I_PNO1_first"/>
</dbReference>
<dbReference type="InterPro" id="IPR004087">
    <property type="entry name" value="KH_dom"/>
</dbReference>
<dbReference type="InterPro" id="IPR036612">
    <property type="entry name" value="KH_dom_type_1_sf"/>
</dbReference>
<dbReference type="InterPro" id="IPR055211">
    <property type="entry name" value="KH_PNO1_2nd"/>
</dbReference>
<dbReference type="PANTHER" id="PTHR12826">
    <property type="entry name" value="RIBONUCLEASE Y"/>
    <property type="match status" value="1"/>
</dbReference>
<dbReference type="PANTHER" id="PTHR12826:SF13">
    <property type="entry name" value="RNA-BINDING PROTEIN PNO1"/>
    <property type="match status" value="1"/>
</dbReference>
<dbReference type="Pfam" id="PF22891">
    <property type="entry name" value="KH_PNO1_2nd"/>
    <property type="match status" value="1"/>
</dbReference>
<dbReference type="SMART" id="SM00322">
    <property type="entry name" value="KH"/>
    <property type="match status" value="1"/>
</dbReference>
<dbReference type="SUPFAM" id="SSF54791">
    <property type="entry name" value="Eukaryotic type KH-domain (KH-domain type I)"/>
    <property type="match status" value="1"/>
</dbReference>
<keyword id="KW-0007">Acetylation</keyword>
<keyword id="KW-0539">Nucleus</keyword>
<keyword id="KW-1185">Reference proteome</keyword>
<keyword id="KW-0694">RNA-binding</keyword>
<accession>Q7YRD0</accession>
<accession>A6QLI9</accession>
<protein>
    <recommendedName>
        <fullName>RNA-binding protein PNO1</fullName>
    </recommendedName>
</protein>
<proteinExistence type="evidence at transcript level"/>
<name>PNO1_BOVIN</name>
<feature type="chain" id="PRO_0000270539" description="RNA-binding protein PNO1">
    <location>
        <begin position="1"/>
        <end position="252"/>
    </location>
</feature>
<feature type="domain" description="KH">
    <location>
        <begin position="173"/>
        <end position="225"/>
    </location>
</feature>
<feature type="region of interest" description="Disordered" evidence="2">
    <location>
        <begin position="1"/>
        <end position="66"/>
    </location>
</feature>
<feature type="modified residue" description="N-acetylmethionine" evidence="1">
    <location>
        <position position="1"/>
    </location>
</feature>
<organism>
    <name type="scientific">Bos taurus</name>
    <name type="common">Bovine</name>
    <dbReference type="NCBI Taxonomy" id="9913"/>
    <lineage>
        <taxon>Eukaryota</taxon>
        <taxon>Metazoa</taxon>
        <taxon>Chordata</taxon>
        <taxon>Craniata</taxon>
        <taxon>Vertebrata</taxon>
        <taxon>Euteleostomi</taxon>
        <taxon>Mammalia</taxon>
        <taxon>Eutheria</taxon>
        <taxon>Laurasiatheria</taxon>
        <taxon>Artiodactyla</taxon>
        <taxon>Ruminantia</taxon>
        <taxon>Pecora</taxon>
        <taxon>Bovidae</taxon>
        <taxon>Bovinae</taxon>
        <taxon>Bos</taxon>
    </lineage>
</organism>
<gene>
    <name type="primary">PNO1</name>
</gene>
<evidence type="ECO:0000250" key="1">
    <source>
        <dbReference type="UniProtKB" id="Q9NRX1"/>
    </source>
</evidence>
<evidence type="ECO:0000256" key="2">
    <source>
        <dbReference type="SAM" id="MobiDB-lite"/>
    </source>
</evidence>
<evidence type="ECO:0000305" key="3"/>
<comment type="function">
    <text evidence="1">Part of the small subunit (SSU) processome, first precursor of the small eukaryotic ribosomal subunit. During the assembly of the SSU processome in the nucleolus, many ribosome biogenesis factors, an RNA chaperone and ribosomal proteins associate with the nascent pre-rRNA and work in concert to generate RNA folding, modifications, rearrangements and cleavage as well as targeted degradation of pre-ribosomal RNA by the RNA exosome. Positively regulates dimethylation of two adjacent adenosines in the loop of a conserved hairpin near the 3'-end of 18S rRNA.</text>
</comment>
<comment type="subunit">
    <text evidence="1">Part of the small subunit (SSU) processome, composed of more than 70 proteins and the RNA chaperone small nucleolar RNA (snoRNA) U3.</text>
</comment>
<comment type="subcellular location">
    <subcellularLocation>
        <location evidence="1">Nucleus</location>
        <location evidence="1">Nucleolus</location>
    </subcellularLocation>
</comment>
<comment type="similarity">
    <text evidence="3">Belongs to the PNO1 family.</text>
</comment>
<sequence length="252" mass="27937">MESVMEAQSPLAEDGFSQVTRKGGRRAKKRQAEQPSTQEEGGDATCMDTEEARPAKRPVFPPLSGDGFLSGKEETRKIPVPANRYTPLKENWLKIFTPIVEHLGLQIRFNLKSRNVEIRTCKETKDVSALTKAADFVKAFILGFQVEDALALIRLDDLFLESFEITDVKPLKGDHLSRAIGRIAGKGGKTKFTIENVTRTRIVLADVKVHILGSFQNIKMARTAICNLILGNPPSKVYGNIRAVASRAADRF</sequence>